<dbReference type="EMBL" id="AJ938182">
    <property type="protein sequence ID" value="CAI81112.1"/>
    <property type="molecule type" value="Genomic_DNA"/>
</dbReference>
<dbReference type="SMR" id="Q2YSX9"/>
<dbReference type="KEGG" id="sab:SAB1423c"/>
<dbReference type="HOGENOM" id="CLU_190949_0_2_9"/>
<dbReference type="GO" id="GO:0005737">
    <property type="term" value="C:cytoplasm"/>
    <property type="evidence" value="ECO:0007669"/>
    <property type="project" value="UniProtKB-ARBA"/>
</dbReference>
<dbReference type="GO" id="GO:1990904">
    <property type="term" value="C:ribonucleoprotein complex"/>
    <property type="evidence" value="ECO:0007669"/>
    <property type="project" value="UniProtKB-KW"/>
</dbReference>
<dbReference type="GO" id="GO:0005840">
    <property type="term" value="C:ribosome"/>
    <property type="evidence" value="ECO:0007669"/>
    <property type="project" value="UniProtKB-KW"/>
</dbReference>
<dbReference type="GO" id="GO:0003735">
    <property type="term" value="F:structural constituent of ribosome"/>
    <property type="evidence" value="ECO:0007669"/>
    <property type="project" value="InterPro"/>
</dbReference>
<dbReference type="GO" id="GO:0006412">
    <property type="term" value="P:translation"/>
    <property type="evidence" value="ECO:0007669"/>
    <property type="project" value="UniProtKB-UniRule"/>
</dbReference>
<dbReference type="Gene3D" id="2.20.28.120">
    <property type="entry name" value="Ribosomal protein L33"/>
    <property type="match status" value="1"/>
</dbReference>
<dbReference type="HAMAP" id="MF_00294">
    <property type="entry name" value="Ribosomal_bL33"/>
    <property type="match status" value="1"/>
</dbReference>
<dbReference type="InterPro" id="IPR001705">
    <property type="entry name" value="Ribosomal_bL33"/>
</dbReference>
<dbReference type="InterPro" id="IPR018264">
    <property type="entry name" value="Ribosomal_bL33_CS"/>
</dbReference>
<dbReference type="InterPro" id="IPR038584">
    <property type="entry name" value="Ribosomal_bL33_sf"/>
</dbReference>
<dbReference type="InterPro" id="IPR011332">
    <property type="entry name" value="Ribosomal_zn-bd"/>
</dbReference>
<dbReference type="NCBIfam" id="NF001764">
    <property type="entry name" value="PRK00504.1"/>
    <property type="match status" value="1"/>
</dbReference>
<dbReference type="NCBIfam" id="NF001860">
    <property type="entry name" value="PRK00595.1"/>
    <property type="match status" value="1"/>
</dbReference>
<dbReference type="NCBIfam" id="TIGR01023">
    <property type="entry name" value="rpmG_bact"/>
    <property type="match status" value="1"/>
</dbReference>
<dbReference type="PANTHER" id="PTHR43168">
    <property type="entry name" value="50S RIBOSOMAL PROTEIN L33, CHLOROPLASTIC"/>
    <property type="match status" value="1"/>
</dbReference>
<dbReference type="PANTHER" id="PTHR43168:SF2">
    <property type="entry name" value="LARGE RIBOSOMAL SUBUNIT PROTEIN BL33C"/>
    <property type="match status" value="1"/>
</dbReference>
<dbReference type="Pfam" id="PF00471">
    <property type="entry name" value="Ribosomal_L33"/>
    <property type="match status" value="1"/>
</dbReference>
<dbReference type="SUPFAM" id="SSF57829">
    <property type="entry name" value="Zn-binding ribosomal proteins"/>
    <property type="match status" value="1"/>
</dbReference>
<dbReference type="PROSITE" id="PS00582">
    <property type="entry name" value="RIBOSOMAL_L33"/>
    <property type="match status" value="1"/>
</dbReference>
<feature type="chain" id="PRO_0000356679" description="Large ribosomal subunit protein bL33C">
    <location>
        <begin position="1"/>
        <end position="49"/>
    </location>
</feature>
<protein>
    <recommendedName>
        <fullName evidence="1">Large ribosomal subunit protein bL33C</fullName>
    </recommendedName>
    <alternativeName>
        <fullName evidence="1">50S ribosomal protein L33 3</fullName>
    </alternativeName>
</protein>
<sequence length="49" mass="5873">MRVNVTLACTECGDRNYITTKNKRNNPERVEMKKFCSRENKQTLHRETK</sequence>
<name>RL333_STAAB</name>
<keyword id="KW-0687">Ribonucleoprotein</keyword>
<keyword id="KW-0689">Ribosomal protein</keyword>
<reference key="1">
    <citation type="journal article" date="2007" name="PLoS ONE">
        <title>Molecular correlates of host specialization in Staphylococcus aureus.</title>
        <authorList>
            <person name="Herron-Olson L."/>
            <person name="Fitzgerald J.R."/>
            <person name="Musser J.M."/>
            <person name="Kapur V."/>
        </authorList>
    </citation>
    <scope>NUCLEOTIDE SEQUENCE [LARGE SCALE GENOMIC DNA]</scope>
    <source>
        <strain>bovine RF122 / ET3-1</strain>
    </source>
</reference>
<evidence type="ECO:0000255" key="1">
    <source>
        <dbReference type="HAMAP-Rule" id="MF_00294"/>
    </source>
</evidence>
<accession>Q2YSX9</accession>
<comment type="similarity">
    <text evidence="1">Belongs to the bacterial ribosomal protein bL33 family.</text>
</comment>
<organism>
    <name type="scientific">Staphylococcus aureus (strain bovine RF122 / ET3-1)</name>
    <dbReference type="NCBI Taxonomy" id="273036"/>
    <lineage>
        <taxon>Bacteria</taxon>
        <taxon>Bacillati</taxon>
        <taxon>Bacillota</taxon>
        <taxon>Bacilli</taxon>
        <taxon>Bacillales</taxon>
        <taxon>Staphylococcaceae</taxon>
        <taxon>Staphylococcus</taxon>
    </lineage>
</organism>
<gene>
    <name evidence="1" type="primary">rpmG3</name>
    <name type="ordered locus">SAB1423c</name>
</gene>
<proteinExistence type="inferred from homology"/>